<gene>
    <name evidence="1" type="primary">rnpA</name>
    <name type="ordered locus">SPCG_2008</name>
</gene>
<feature type="chain" id="PRO_1000100399" description="Ribonuclease P protein component">
    <location>
        <begin position="1"/>
        <end position="123"/>
    </location>
</feature>
<protein>
    <recommendedName>
        <fullName evidence="1">Ribonuclease P protein component</fullName>
        <shortName evidence="1">RNase P protein</shortName>
        <shortName evidence="1">RNaseP protein</shortName>
        <ecNumber evidence="1">3.1.26.5</ecNumber>
    </recommendedName>
    <alternativeName>
        <fullName evidence="1">Protein C5</fullName>
    </alternativeName>
</protein>
<reference key="1">
    <citation type="journal article" date="2009" name="BMC Genomics">
        <title>Genome evolution driven by host adaptations results in a more virulent and antimicrobial-resistant Streptococcus pneumoniae serotype 14.</title>
        <authorList>
            <person name="Ding F."/>
            <person name="Tang P."/>
            <person name="Hsu M.-H."/>
            <person name="Cui P."/>
            <person name="Hu S."/>
            <person name="Yu J."/>
            <person name="Chiu C.-H."/>
        </authorList>
    </citation>
    <scope>NUCLEOTIDE SEQUENCE [LARGE SCALE GENOMIC DNA]</scope>
    <source>
        <strain>CGSP14</strain>
    </source>
</reference>
<comment type="function">
    <text evidence="1">RNaseP catalyzes the removal of the 5'-leader sequence from pre-tRNA to produce the mature 5'-terminus. It can also cleave other RNA substrates such as 4.5S RNA. The protein component plays an auxiliary but essential role in vivo by binding to the 5'-leader sequence and broadening the substrate specificity of the ribozyme.</text>
</comment>
<comment type="catalytic activity">
    <reaction evidence="1">
        <text>Endonucleolytic cleavage of RNA, removing 5'-extranucleotides from tRNA precursor.</text>
        <dbReference type="EC" id="3.1.26.5"/>
    </reaction>
</comment>
<comment type="subunit">
    <text evidence="1">Consists of a catalytic RNA component (M1 or rnpB) and a protein subunit.</text>
</comment>
<comment type="similarity">
    <text evidence="1">Belongs to the RnpA family.</text>
</comment>
<sequence>MKKNFRVKREKDFKAIFKEGTSFANRKFVVYQLENQKNHFRVGLSVSKKLGNAVTRNQIKRRIRHIIQNAKGSLVEDVDFVVIARKGVETLGYAEMEKNLLHVLKLSKIYREGNGSEKETKVD</sequence>
<evidence type="ECO:0000255" key="1">
    <source>
        <dbReference type="HAMAP-Rule" id="MF_00227"/>
    </source>
</evidence>
<accession>B2IML6</accession>
<name>RNPA_STRPS</name>
<keyword id="KW-0255">Endonuclease</keyword>
<keyword id="KW-0378">Hydrolase</keyword>
<keyword id="KW-0540">Nuclease</keyword>
<keyword id="KW-0694">RNA-binding</keyword>
<keyword id="KW-0819">tRNA processing</keyword>
<proteinExistence type="inferred from homology"/>
<organism>
    <name type="scientific">Streptococcus pneumoniae (strain CGSP14)</name>
    <dbReference type="NCBI Taxonomy" id="516950"/>
    <lineage>
        <taxon>Bacteria</taxon>
        <taxon>Bacillati</taxon>
        <taxon>Bacillota</taxon>
        <taxon>Bacilli</taxon>
        <taxon>Lactobacillales</taxon>
        <taxon>Streptococcaceae</taxon>
        <taxon>Streptococcus</taxon>
    </lineage>
</organism>
<dbReference type="EC" id="3.1.26.5" evidence="1"/>
<dbReference type="EMBL" id="CP001033">
    <property type="protein sequence ID" value="ACB91260.1"/>
    <property type="molecule type" value="Genomic_DNA"/>
</dbReference>
<dbReference type="RefSeq" id="WP_000739246.1">
    <property type="nucleotide sequence ID" value="NC_010582.1"/>
</dbReference>
<dbReference type="SMR" id="B2IML6"/>
<dbReference type="GeneID" id="45652735"/>
<dbReference type="KEGG" id="spw:SPCG_2008"/>
<dbReference type="HOGENOM" id="CLU_117179_9_1_9"/>
<dbReference type="GO" id="GO:0030677">
    <property type="term" value="C:ribonuclease P complex"/>
    <property type="evidence" value="ECO:0007669"/>
    <property type="project" value="TreeGrafter"/>
</dbReference>
<dbReference type="GO" id="GO:0042781">
    <property type="term" value="F:3'-tRNA processing endoribonuclease activity"/>
    <property type="evidence" value="ECO:0007669"/>
    <property type="project" value="TreeGrafter"/>
</dbReference>
<dbReference type="GO" id="GO:0004526">
    <property type="term" value="F:ribonuclease P activity"/>
    <property type="evidence" value="ECO:0007669"/>
    <property type="project" value="UniProtKB-UniRule"/>
</dbReference>
<dbReference type="GO" id="GO:0000049">
    <property type="term" value="F:tRNA binding"/>
    <property type="evidence" value="ECO:0007669"/>
    <property type="project" value="UniProtKB-UniRule"/>
</dbReference>
<dbReference type="GO" id="GO:0001682">
    <property type="term" value="P:tRNA 5'-leader removal"/>
    <property type="evidence" value="ECO:0007669"/>
    <property type="project" value="UniProtKB-UniRule"/>
</dbReference>
<dbReference type="FunFam" id="3.30.230.10:FF:000021">
    <property type="entry name" value="Ribonuclease P protein component"/>
    <property type="match status" value="1"/>
</dbReference>
<dbReference type="Gene3D" id="3.30.230.10">
    <property type="match status" value="1"/>
</dbReference>
<dbReference type="HAMAP" id="MF_00227">
    <property type="entry name" value="RNase_P"/>
    <property type="match status" value="1"/>
</dbReference>
<dbReference type="InterPro" id="IPR020568">
    <property type="entry name" value="Ribosomal_Su5_D2-typ_SF"/>
</dbReference>
<dbReference type="InterPro" id="IPR014721">
    <property type="entry name" value="Ribsml_uS5_D2-typ_fold_subgr"/>
</dbReference>
<dbReference type="InterPro" id="IPR000100">
    <property type="entry name" value="RNase_P"/>
</dbReference>
<dbReference type="InterPro" id="IPR020539">
    <property type="entry name" value="RNase_P_CS"/>
</dbReference>
<dbReference type="NCBIfam" id="TIGR00188">
    <property type="entry name" value="rnpA"/>
    <property type="match status" value="1"/>
</dbReference>
<dbReference type="PANTHER" id="PTHR33992">
    <property type="entry name" value="RIBONUCLEASE P PROTEIN COMPONENT"/>
    <property type="match status" value="1"/>
</dbReference>
<dbReference type="PANTHER" id="PTHR33992:SF1">
    <property type="entry name" value="RIBONUCLEASE P PROTEIN COMPONENT"/>
    <property type="match status" value="1"/>
</dbReference>
<dbReference type="Pfam" id="PF00825">
    <property type="entry name" value="Ribonuclease_P"/>
    <property type="match status" value="1"/>
</dbReference>
<dbReference type="SUPFAM" id="SSF54211">
    <property type="entry name" value="Ribosomal protein S5 domain 2-like"/>
    <property type="match status" value="1"/>
</dbReference>
<dbReference type="PROSITE" id="PS00648">
    <property type="entry name" value="RIBONUCLEASE_P"/>
    <property type="match status" value="1"/>
</dbReference>